<keyword id="KW-0007">Acetylation</keyword>
<keyword id="KW-1185">Reference proteome</keyword>
<keyword id="KW-0687">Ribonucleoprotein</keyword>
<keyword id="KW-0689">Ribosomal protein</keyword>
<keyword id="KW-0694">RNA-binding</keyword>
<keyword id="KW-0699">rRNA-binding</keyword>
<comment type="function">
    <text evidence="2">This protein binds to the 23S rRNA, and is important in its secondary structure. It is located near the subunit interface in the base of the L7/L12 stalk, and near the tRNA binding site of the peptidyltransferase center.</text>
</comment>
<comment type="subunit">
    <text evidence="2">Part of the 50S ribosomal subunit.</text>
</comment>
<comment type="similarity">
    <text evidence="2">Belongs to the universal ribosomal protein uL6 family.</text>
</comment>
<organism>
    <name type="scientific">Escherichia coli O6:H1 (strain CFT073 / ATCC 700928 / UPEC)</name>
    <dbReference type="NCBI Taxonomy" id="199310"/>
    <lineage>
        <taxon>Bacteria</taxon>
        <taxon>Pseudomonadati</taxon>
        <taxon>Pseudomonadota</taxon>
        <taxon>Gammaproteobacteria</taxon>
        <taxon>Enterobacterales</taxon>
        <taxon>Enterobacteriaceae</taxon>
        <taxon>Escherichia</taxon>
    </lineage>
</organism>
<accession>P0AG56</accession>
<accession>P02390</accession>
<dbReference type="EMBL" id="AE014075">
    <property type="protein sequence ID" value="AAN82506.1"/>
    <property type="molecule type" value="Genomic_DNA"/>
</dbReference>
<dbReference type="RefSeq" id="WP_000091945.1">
    <property type="nucleotide sequence ID" value="NZ_CP051263.1"/>
</dbReference>
<dbReference type="SMR" id="P0AG56"/>
<dbReference type="STRING" id="199310.c4068"/>
<dbReference type="GeneID" id="86948169"/>
<dbReference type="KEGG" id="ecc:c4068"/>
<dbReference type="eggNOG" id="COG0097">
    <property type="taxonomic scope" value="Bacteria"/>
</dbReference>
<dbReference type="HOGENOM" id="CLU_065464_1_2_6"/>
<dbReference type="BioCyc" id="ECOL199310:C4068-MONOMER"/>
<dbReference type="Proteomes" id="UP000001410">
    <property type="component" value="Chromosome"/>
</dbReference>
<dbReference type="GO" id="GO:0022625">
    <property type="term" value="C:cytosolic large ribosomal subunit"/>
    <property type="evidence" value="ECO:0007669"/>
    <property type="project" value="TreeGrafter"/>
</dbReference>
<dbReference type="GO" id="GO:0019843">
    <property type="term" value="F:rRNA binding"/>
    <property type="evidence" value="ECO:0007669"/>
    <property type="project" value="UniProtKB-UniRule"/>
</dbReference>
<dbReference type="GO" id="GO:0003735">
    <property type="term" value="F:structural constituent of ribosome"/>
    <property type="evidence" value="ECO:0007669"/>
    <property type="project" value="InterPro"/>
</dbReference>
<dbReference type="GO" id="GO:0002181">
    <property type="term" value="P:cytoplasmic translation"/>
    <property type="evidence" value="ECO:0007669"/>
    <property type="project" value="TreeGrafter"/>
</dbReference>
<dbReference type="FunFam" id="3.90.930.12:FF:000001">
    <property type="entry name" value="50S ribosomal protein L6"/>
    <property type="match status" value="1"/>
</dbReference>
<dbReference type="FunFam" id="3.90.930.12:FF:000002">
    <property type="entry name" value="50S ribosomal protein L6"/>
    <property type="match status" value="1"/>
</dbReference>
<dbReference type="Gene3D" id="3.90.930.12">
    <property type="entry name" value="Ribosomal protein L6, alpha-beta domain"/>
    <property type="match status" value="2"/>
</dbReference>
<dbReference type="HAMAP" id="MF_01365_B">
    <property type="entry name" value="Ribosomal_uL6_B"/>
    <property type="match status" value="1"/>
</dbReference>
<dbReference type="InterPro" id="IPR000702">
    <property type="entry name" value="Ribosomal_uL6-like"/>
</dbReference>
<dbReference type="InterPro" id="IPR036789">
    <property type="entry name" value="Ribosomal_uL6-like_a/b-dom_sf"/>
</dbReference>
<dbReference type="InterPro" id="IPR020040">
    <property type="entry name" value="Ribosomal_uL6_a/b-dom"/>
</dbReference>
<dbReference type="InterPro" id="IPR019906">
    <property type="entry name" value="Ribosomal_uL6_bac-type"/>
</dbReference>
<dbReference type="InterPro" id="IPR002358">
    <property type="entry name" value="Ribosomal_uL6_CS"/>
</dbReference>
<dbReference type="NCBIfam" id="TIGR03654">
    <property type="entry name" value="L6_bact"/>
    <property type="match status" value="1"/>
</dbReference>
<dbReference type="PANTHER" id="PTHR11655">
    <property type="entry name" value="60S/50S RIBOSOMAL PROTEIN L6/L9"/>
    <property type="match status" value="1"/>
</dbReference>
<dbReference type="PANTHER" id="PTHR11655:SF14">
    <property type="entry name" value="LARGE RIBOSOMAL SUBUNIT PROTEIN UL6M"/>
    <property type="match status" value="1"/>
</dbReference>
<dbReference type="Pfam" id="PF00347">
    <property type="entry name" value="Ribosomal_L6"/>
    <property type="match status" value="2"/>
</dbReference>
<dbReference type="PIRSF" id="PIRSF002162">
    <property type="entry name" value="Ribosomal_L6"/>
    <property type="match status" value="1"/>
</dbReference>
<dbReference type="PRINTS" id="PR00059">
    <property type="entry name" value="RIBOSOMALL6"/>
</dbReference>
<dbReference type="SUPFAM" id="SSF56053">
    <property type="entry name" value="Ribosomal protein L6"/>
    <property type="match status" value="2"/>
</dbReference>
<dbReference type="PROSITE" id="PS00525">
    <property type="entry name" value="RIBOSOMAL_L6_1"/>
    <property type="match status" value="1"/>
</dbReference>
<protein>
    <recommendedName>
        <fullName evidence="2">Large ribosomal subunit protein uL6</fullName>
    </recommendedName>
    <alternativeName>
        <fullName evidence="3">50S ribosomal protein L6</fullName>
    </alternativeName>
</protein>
<evidence type="ECO:0000250" key="1"/>
<evidence type="ECO:0000255" key="2">
    <source>
        <dbReference type="HAMAP-Rule" id="MF_01365"/>
    </source>
</evidence>
<evidence type="ECO:0000305" key="3"/>
<name>RL6_ECOL6</name>
<proteinExistence type="inferred from homology"/>
<sequence length="177" mass="18904">MSRVAKAPVVVPAGVDVKINGQVITIKGKNGELTRTLNDAVEVKHADNTLTFGPRDGYADGWAQAGTARALLNSMVIGVTEGFTKKLQLVGVGYRAAVKGNVINLSLGFSHPVDHQLPAGITAECPTQTEIVLKGADKQVIGQVAADLRAYRRPEPYKGKGVRYADEVVRTKEAKKK</sequence>
<gene>
    <name evidence="2" type="primary">rplF</name>
    <name type="ordered locus">c4068</name>
</gene>
<feature type="initiator methionine" description="Removed" evidence="1">
    <location>
        <position position="1"/>
    </location>
</feature>
<feature type="chain" id="PRO_0000131050" description="Large ribosomal subunit protein uL6">
    <location>
        <begin position="2"/>
        <end position="177"/>
    </location>
</feature>
<feature type="modified residue" description="N6-acetyllysine" evidence="2">
    <location>
        <position position="44"/>
    </location>
</feature>
<reference key="1">
    <citation type="journal article" date="2002" name="Proc. Natl. Acad. Sci. U.S.A.">
        <title>Extensive mosaic structure revealed by the complete genome sequence of uropathogenic Escherichia coli.</title>
        <authorList>
            <person name="Welch R.A."/>
            <person name="Burland V."/>
            <person name="Plunkett G. III"/>
            <person name="Redford P."/>
            <person name="Roesch P."/>
            <person name="Rasko D."/>
            <person name="Buckles E.L."/>
            <person name="Liou S.-R."/>
            <person name="Boutin A."/>
            <person name="Hackett J."/>
            <person name="Stroud D."/>
            <person name="Mayhew G.F."/>
            <person name="Rose D.J."/>
            <person name="Zhou S."/>
            <person name="Schwartz D.C."/>
            <person name="Perna N.T."/>
            <person name="Mobley H.L.T."/>
            <person name="Donnenberg M.S."/>
            <person name="Blattner F.R."/>
        </authorList>
    </citation>
    <scope>NUCLEOTIDE SEQUENCE [LARGE SCALE GENOMIC DNA]</scope>
    <source>
        <strain>CFT073 / ATCC 700928 / UPEC</strain>
    </source>
</reference>